<proteinExistence type="evidence at protein level"/>
<sequence length="1115" mass="114824">MLPLEHKASGRVQATGRGVRASVELSSVLPQQRAAQLQHQKCNTGARLGRDPRRGVDAERTLVCTAATTASVPSTSGASPSGSQLSSKALRPRRFSAPVIARLLRSTTTVQELADLVQQQSLYMDSSHVGIAMLHLALLVSRAEQQAAAQLQLQLAAKQAATRRAGSGASTSGRARGWGSGPGRNGSGSSSVSVNGSGSSSNGSSSSSSSLAMGMQLSMASIGDDVVSGVNAGPVPSGGADALLDLEMSSILDDDDGAGARQLQQMSDDLAAGLEAAATTTAAPEAGVAAAGGTGAGAAADAAASSSAPSLVAAAAAAAAAAASPASSPDVARTLRTLLSRAFSLGLDSLSGPQLAAVFTGLAVLRRPRQQQQQQQQAGAAGAGANAGAGGVGGVGVSAGDRLVAEQLLAAMGPKLYECRPQDLANTLASVALLGLPPDADLRTSFYAAVRQQQRRFGPRELATTLWAYGAMGTYVQEDAVQLVLELSRARLTSFSPLQLAKAVQGLAALRYRPSPEWVEAYCSVLRPALRRMSSRELCAVLLALASLQVGLDGGTRAALLVHTFSGPLPGMAPGEVALSLWALGRLSAVDMDLPALIDLDMSGRVLDLTSRLLAAGGFSGGELQQLLEGLTRLALQPPLEWMQAFVAALQPQLDKLDAQQLAGVLNSLAAQQYRPQPQMQEVVLAATQANMKQLLADTTCSAALLTALRRLNIEPPPGWVGALLEESRSALKNRCTDLHLANLAGSLAAWGVRPDGRWAARLMWRSQVLMNEDRMSPRALVALLQAMVSLGLSPNPVWTQLCLQAAVRRASQPAFEPHHYGTLMASLHALGIQPPQEWLTRMLLSTYRCWDRFSVTHWSSLLPALVLLKARPPREWLRRFEATSAARLADCSALQLLTLAVSLAQLHQLHAAGAVADTPLLLPGAAAAAAAAAPAGASSAAAAGDSPAALSAVPAAAGDGALVPSFMSIDDDGTAAVAAAATALAAAEPAAHAATSTTTATAVAHPQPQLLPQAQALPQPGPEWQAAWWAASTRLLLRVRYAPSELVLTAGWLGSLGLRPPPEWLQACAEVAARYSKVMDAAERQQLAAAVAPLALEAVAPPSAPPAGAASTAH</sequence>
<protein>
    <recommendedName>
        <fullName>Tbc2 translation factor, chloroplastic</fullName>
    </recommendedName>
</protein>
<feature type="transit peptide" description="Chloroplast" evidence="1">
    <location>
        <begin position="1"/>
        <end status="unknown"/>
    </location>
</feature>
<feature type="chain" id="PRO_0000022474" description="Tbc2 translation factor, chloroplastic">
    <location>
        <begin status="unknown"/>
        <end position="1115"/>
    </location>
</feature>
<feature type="repeat" description="1">
    <location>
        <begin position="483"/>
        <end position="521"/>
    </location>
</feature>
<feature type="repeat" description="2">
    <location>
        <begin position="607"/>
        <end position="645"/>
    </location>
</feature>
<feature type="repeat" description="3">
    <location>
        <begin position="685"/>
        <end position="723"/>
    </location>
</feature>
<feature type="repeat" description="4">
    <location>
        <begin position="724"/>
        <end position="763"/>
    </location>
</feature>
<feature type="repeat" description="5">
    <location>
        <begin position="764"/>
        <end position="803"/>
    </location>
</feature>
<feature type="repeat" description="6">
    <location>
        <begin position="804"/>
        <end position="842"/>
    </location>
</feature>
<feature type="repeat" description="7">
    <location>
        <begin position="843"/>
        <end position="880"/>
    </location>
</feature>
<feature type="repeat" description="8">
    <location>
        <begin position="990"/>
        <end position="1029"/>
    </location>
</feature>
<feature type="repeat" description="9">
    <location>
        <begin position="1030"/>
        <end position="1068"/>
    </location>
</feature>
<feature type="region of interest" description="Disordered" evidence="2">
    <location>
        <begin position="69"/>
        <end position="90"/>
    </location>
</feature>
<feature type="region of interest" description="Disordered" evidence="2">
    <location>
        <begin position="163"/>
        <end position="210"/>
    </location>
</feature>
<feature type="region of interest" description="9 X 38 AA approximate repeats">
    <location>
        <begin position="483"/>
        <end position="1068"/>
    </location>
</feature>
<feature type="compositionally biased region" description="Low complexity" evidence="2">
    <location>
        <begin position="69"/>
        <end position="87"/>
    </location>
</feature>
<feature type="compositionally biased region" description="Low complexity" evidence="2">
    <location>
        <begin position="163"/>
        <end position="175"/>
    </location>
</feature>
<feature type="compositionally biased region" description="Gly residues" evidence="2">
    <location>
        <begin position="176"/>
        <end position="186"/>
    </location>
</feature>
<feature type="compositionally biased region" description="Low complexity" evidence="2">
    <location>
        <begin position="187"/>
        <end position="210"/>
    </location>
</feature>
<organism>
    <name type="scientific">Chlamydomonas reinhardtii</name>
    <name type="common">Chlamydomonas smithii</name>
    <dbReference type="NCBI Taxonomy" id="3055"/>
    <lineage>
        <taxon>Eukaryota</taxon>
        <taxon>Viridiplantae</taxon>
        <taxon>Chlorophyta</taxon>
        <taxon>core chlorophytes</taxon>
        <taxon>Chlorophyceae</taxon>
        <taxon>CS clade</taxon>
        <taxon>Chlamydomonadales</taxon>
        <taxon>Chlamydomonadaceae</taxon>
        <taxon>Chlamydomonas</taxon>
    </lineage>
</organism>
<name>TBC2_CHLRE</name>
<gene>
    <name type="primary">TBC2</name>
</gene>
<dbReference type="EMBL" id="AJ427966">
    <property type="protein sequence ID" value="CAD20887.1"/>
    <property type="molecule type" value="mRNA"/>
</dbReference>
<dbReference type="SMR" id="Q8VXP3"/>
<dbReference type="PaxDb" id="3055-EDP02198"/>
<dbReference type="GO" id="GO:0009570">
    <property type="term" value="C:chloroplast stroma"/>
    <property type="evidence" value="ECO:0007669"/>
    <property type="project" value="UniProtKB-SubCell"/>
</dbReference>
<dbReference type="InterPro" id="IPR050870">
    <property type="entry name" value="FAST_kinase"/>
</dbReference>
<dbReference type="PANTHER" id="PTHR21228">
    <property type="entry name" value="FAST LEU-RICH DOMAIN-CONTAINING"/>
    <property type="match status" value="1"/>
</dbReference>
<dbReference type="PANTHER" id="PTHR21228:SF40">
    <property type="entry name" value="LD45607P"/>
    <property type="match status" value="1"/>
</dbReference>
<reference key="1">
    <citation type="journal article" date="2002" name="J. Cell Biol.">
        <title>Characterization of Tbc2, a nucleus-encoded factor specifically required for translation of the chloroplast psbC mRNA in Chlamydomonas reinhardtii.</title>
        <authorList>
            <person name="Auchincloss A.H."/>
            <person name="Zerges W."/>
            <person name="Perron K."/>
            <person name="Girard-Bascou J."/>
            <person name="Rochaix J.-D."/>
        </authorList>
    </citation>
    <scope>NUCLEOTIDE SEQUENCE [MRNA]</scope>
    <scope>CHARACTERIZATION</scope>
    <source>
        <strain>137c / CC-125</strain>
    </source>
</reference>
<accession>Q8VXP3</accession>
<comment type="function">
    <text>Required for expression of the chloroplast encoded psbC mRNA, most likely for translation initiation. Interacts with the 5'-UTR of psbC.</text>
</comment>
<comment type="subunit">
    <text>Part of a 400 kDa complex which is not stably associated with RNA.</text>
</comment>
<comment type="subcellular location">
    <subcellularLocation>
        <location>Plastid</location>
        <location>Chloroplast stroma</location>
    </subcellularLocation>
</comment>
<keyword id="KW-0150">Chloroplast</keyword>
<keyword id="KW-0934">Plastid</keyword>
<keyword id="KW-0677">Repeat</keyword>
<keyword id="KW-0809">Transit peptide</keyword>
<evidence type="ECO:0000255" key="1"/>
<evidence type="ECO:0000256" key="2">
    <source>
        <dbReference type="SAM" id="MobiDB-lite"/>
    </source>
</evidence>